<protein>
    <recommendedName>
        <fullName>Ribosomal protein S6 kinase-like 1</fullName>
        <ecNumber>2.7.11.1</ecNumber>
    </recommendedName>
</protein>
<organism>
    <name type="scientific">Mus musculus</name>
    <name type="common">Mouse</name>
    <dbReference type="NCBI Taxonomy" id="10090"/>
    <lineage>
        <taxon>Eukaryota</taxon>
        <taxon>Metazoa</taxon>
        <taxon>Chordata</taxon>
        <taxon>Craniata</taxon>
        <taxon>Vertebrata</taxon>
        <taxon>Euteleostomi</taxon>
        <taxon>Mammalia</taxon>
        <taxon>Eutheria</taxon>
        <taxon>Euarchontoglires</taxon>
        <taxon>Glires</taxon>
        <taxon>Rodentia</taxon>
        <taxon>Myomorpha</taxon>
        <taxon>Muroidea</taxon>
        <taxon>Muridae</taxon>
        <taxon>Murinae</taxon>
        <taxon>Mus</taxon>
        <taxon>Mus</taxon>
    </lineage>
</organism>
<name>RPKL1_MOUSE</name>
<proteinExistence type="evidence at protein level"/>
<comment type="catalytic activity">
    <reaction>
        <text>L-seryl-[protein] + ATP = O-phospho-L-seryl-[protein] + ADP + H(+)</text>
        <dbReference type="Rhea" id="RHEA:17989"/>
        <dbReference type="Rhea" id="RHEA-COMP:9863"/>
        <dbReference type="Rhea" id="RHEA-COMP:11604"/>
        <dbReference type="ChEBI" id="CHEBI:15378"/>
        <dbReference type="ChEBI" id="CHEBI:29999"/>
        <dbReference type="ChEBI" id="CHEBI:30616"/>
        <dbReference type="ChEBI" id="CHEBI:83421"/>
        <dbReference type="ChEBI" id="CHEBI:456216"/>
        <dbReference type="EC" id="2.7.11.1"/>
    </reaction>
</comment>
<comment type="catalytic activity">
    <reaction>
        <text>L-threonyl-[protein] + ATP = O-phospho-L-threonyl-[protein] + ADP + H(+)</text>
        <dbReference type="Rhea" id="RHEA:46608"/>
        <dbReference type="Rhea" id="RHEA-COMP:11060"/>
        <dbReference type="Rhea" id="RHEA-COMP:11605"/>
        <dbReference type="ChEBI" id="CHEBI:15378"/>
        <dbReference type="ChEBI" id="CHEBI:30013"/>
        <dbReference type="ChEBI" id="CHEBI:30616"/>
        <dbReference type="ChEBI" id="CHEBI:61977"/>
        <dbReference type="ChEBI" id="CHEBI:456216"/>
        <dbReference type="EC" id="2.7.11.1"/>
    </reaction>
</comment>
<comment type="alternative products">
    <event type="alternative splicing"/>
    <isoform>
        <id>Q8R2S1-1</id>
        <name>1</name>
        <sequence type="displayed"/>
    </isoform>
    <isoform>
        <id>Q8R2S1-2</id>
        <name>2</name>
        <sequence type="described" ref="VSP_017935 VSP_017936 VSP_017937 VSP_017938"/>
    </isoform>
</comment>
<comment type="similarity">
    <text evidence="1">Belongs to the protein kinase superfamily. Ser/Thr protein kinase family. S6 kinase subfamily.</text>
</comment>
<accession>Q8R2S1</accession>
<accession>Q8R1D4</accession>
<evidence type="ECO:0000255" key="1">
    <source>
        <dbReference type="PROSITE-ProRule" id="PRU00159"/>
    </source>
</evidence>
<evidence type="ECO:0000256" key="2">
    <source>
        <dbReference type="SAM" id="MobiDB-lite"/>
    </source>
</evidence>
<evidence type="ECO:0000303" key="3">
    <source>
    </source>
</evidence>
<evidence type="ECO:0000305" key="4"/>
<keyword id="KW-0025">Alternative splicing</keyword>
<keyword id="KW-0067">ATP-binding</keyword>
<keyword id="KW-0903">Direct protein sequencing</keyword>
<keyword id="KW-0418">Kinase</keyword>
<keyword id="KW-0547">Nucleotide-binding</keyword>
<keyword id="KW-1185">Reference proteome</keyword>
<keyword id="KW-0687">Ribonucleoprotein</keyword>
<keyword id="KW-0689">Ribosomal protein</keyword>
<keyword id="KW-0723">Serine/threonine-protein kinase</keyword>
<keyword id="KW-0808">Transferase</keyword>
<feature type="chain" id="PRO_0000232642" description="Ribosomal protein S6 kinase-like 1">
    <location>
        <begin position="1"/>
        <end position="544"/>
    </location>
</feature>
<feature type="domain" description="MIT">
    <location>
        <begin position="87"/>
        <end position="115"/>
    </location>
</feature>
<feature type="domain" description="Protein kinase" evidence="1">
    <location>
        <begin position="145"/>
        <end position="534"/>
    </location>
</feature>
<feature type="region of interest" description="Disordered" evidence="2">
    <location>
        <begin position="262"/>
        <end position="344"/>
    </location>
</feature>
<feature type="region of interest" description="Disordered" evidence="2">
    <location>
        <begin position="353"/>
        <end position="372"/>
    </location>
</feature>
<feature type="compositionally biased region" description="Polar residues" evidence="2">
    <location>
        <begin position="303"/>
        <end position="313"/>
    </location>
</feature>
<feature type="active site" description="Proton acceptor" evidence="1">
    <location>
        <position position="407"/>
    </location>
</feature>
<feature type="binding site" evidence="1">
    <location>
        <begin position="151"/>
        <end position="159"/>
    </location>
    <ligand>
        <name>ATP</name>
        <dbReference type="ChEBI" id="CHEBI:30616"/>
    </ligand>
</feature>
<feature type="binding site" evidence="1">
    <location>
        <position position="177"/>
    </location>
    <ligand>
        <name>ATP</name>
        <dbReference type="ChEBI" id="CHEBI:30616"/>
    </ligand>
</feature>
<feature type="splice variant" id="VSP_017935" description="In isoform 2." evidence="3">
    <location>
        <begin position="79"/>
        <end position="88"/>
    </location>
</feature>
<feature type="splice variant" id="VSP_017936" description="In isoform 2." evidence="3">
    <location>
        <begin position="162"/>
        <end position="177"/>
    </location>
</feature>
<feature type="splice variant" id="VSP_017937" description="In isoform 2." evidence="3">
    <original>EVGGISELTEACDWWSYGS</original>
    <variation>GTVPEPPFRIPGPHPTPAA</variation>
    <location>
        <begin position="449"/>
        <end position="467"/>
    </location>
</feature>
<feature type="splice variant" id="VSP_017938" description="In isoform 2." evidence="3">
    <location>
        <begin position="468"/>
        <end position="544"/>
    </location>
</feature>
<feature type="sequence conflict" description="In Ref. 2; AAH24798." evidence="4" ref="2">
    <original>A</original>
    <variation>AE</variation>
    <location>
        <position position="418"/>
    </location>
</feature>
<dbReference type="EC" id="2.7.11.1"/>
<dbReference type="EMBL" id="AK044050">
    <property type="protein sequence ID" value="BAC31753.1"/>
    <property type="molecule type" value="mRNA"/>
</dbReference>
<dbReference type="EMBL" id="BC024798">
    <property type="protein sequence ID" value="AAH24798.1"/>
    <property type="molecule type" value="mRNA"/>
</dbReference>
<dbReference type="EMBL" id="BC027298">
    <property type="protein sequence ID" value="AAH27298.1"/>
    <property type="molecule type" value="mRNA"/>
</dbReference>
<dbReference type="CCDS" id="CCDS36496.1">
    <molecule id="Q8R2S1-1"/>
</dbReference>
<dbReference type="RefSeq" id="NP_666356.2">
    <molecule id="Q8R2S1-1"/>
    <property type="nucleotide sequence ID" value="NM_146244.4"/>
</dbReference>
<dbReference type="SMR" id="Q8R2S1"/>
<dbReference type="FunCoup" id="Q8R2S1">
    <property type="interactions" value="39"/>
</dbReference>
<dbReference type="STRING" id="10090.ENSMUSP00000152336"/>
<dbReference type="iPTMnet" id="Q8R2S1"/>
<dbReference type="PhosphoSitePlus" id="Q8R2S1"/>
<dbReference type="PaxDb" id="10090-ENSMUSP00000019379"/>
<dbReference type="ProteomicsDB" id="300482">
    <molecule id="Q8R2S1-1"/>
</dbReference>
<dbReference type="ProteomicsDB" id="300483">
    <molecule id="Q8R2S1-2"/>
</dbReference>
<dbReference type="Antibodypedia" id="25730">
    <property type="antibodies" value="183 antibodies from 29 providers"/>
</dbReference>
<dbReference type="DNASU" id="238323"/>
<dbReference type="Ensembl" id="ENSMUST00000221972.2">
    <molecule id="Q8R2S1-1"/>
    <property type="protein sequence ID" value="ENSMUSP00000152336.2"/>
    <property type="gene ID" value="ENSMUSG00000019235.10"/>
</dbReference>
<dbReference type="GeneID" id="238323"/>
<dbReference type="KEGG" id="mmu:238323"/>
<dbReference type="UCSC" id="uc007ogm.2">
    <molecule id="Q8R2S1-1"/>
    <property type="organism name" value="mouse"/>
</dbReference>
<dbReference type="UCSC" id="uc007ogp.2">
    <molecule id="Q8R2S1-2"/>
    <property type="organism name" value="mouse"/>
</dbReference>
<dbReference type="AGR" id="MGI:2443413"/>
<dbReference type="CTD" id="83694"/>
<dbReference type="MGI" id="MGI:2443413">
    <property type="gene designation" value="Rps6kl1"/>
</dbReference>
<dbReference type="VEuPathDB" id="HostDB:ENSMUSG00000019235"/>
<dbReference type="eggNOG" id="KOG0603">
    <property type="taxonomic scope" value="Eukaryota"/>
</dbReference>
<dbReference type="GeneTree" id="ENSGT00940000159815"/>
<dbReference type="HOGENOM" id="CLU_014272_2_0_1"/>
<dbReference type="InParanoid" id="Q8R2S1"/>
<dbReference type="OMA" id="TFRSDWW"/>
<dbReference type="OrthoDB" id="1278353at2759"/>
<dbReference type="PhylomeDB" id="Q8R2S1"/>
<dbReference type="TreeFam" id="TF323964"/>
<dbReference type="BioGRID-ORCS" id="238323">
    <property type="hits" value="2 hits in 80 CRISPR screens"/>
</dbReference>
<dbReference type="PRO" id="PR:Q8R2S1"/>
<dbReference type="Proteomes" id="UP000000589">
    <property type="component" value="Chromosome 12"/>
</dbReference>
<dbReference type="RNAct" id="Q8R2S1">
    <property type="molecule type" value="protein"/>
</dbReference>
<dbReference type="Bgee" id="ENSMUSG00000019235">
    <property type="expression patterns" value="Expressed in neural tube mantle layer and 86 other cell types or tissues"/>
</dbReference>
<dbReference type="ExpressionAtlas" id="Q8R2S1">
    <property type="expression patterns" value="baseline and differential"/>
</dbReference>
<dbReference type="GO" id="GO:1990904">
    <property type="term" value="C:ribonucleoprotein complex"/>
    <property type="evidence" value="ECO:0007669"/>
    <property type="project" value="UniProtKB-KW"/>
</dbReference>
<dbReference type="GO" id="GO:0005840">
    <property type="term" value="C:ribosome"/>
    <property type="evidence" value="ECO:0007669"/>
    <property type="project" value="UniProtKB-KW"/>
</dbReference>
<dbReference type="GO" id="GO:0005524">
    <property type="term" value="F:ATP binding"/>
    <property type="evidence" value="ECO:0007669"/>
    <property type="project" value="UniProtKB-KW"/>
</dbReference>
<dbReference type="GO" id="GO:0106310">
    <property type="term" value="F:protein serine kinase activity"/>
    <property type="evidence" value="ECO:0007669"/>
    <property type="project" value="RHEA"/>
</dbReference>
<dbReference type="GO" id="GO:0004674">
    <property type="term" value="F:protein serine/threonine kinase activity"/>
    <property type="evidence" value="ECO:0007669"/>
    <property type="project" value="UniProtKB-KW"/>
</dbReference>
<dbReference type="CDD" id="cd02677">
    <property type="entry name" value="MIT_SNX15"/>
    <property type="match status" value="1"/>
</dbReference>
<dbReference type="CDD" id="cd05576">
    <property type="entry name" value="STKc_RPK118_like"/>
    <property type="match status" value="1"/>
</dbReference>
<dbReference type="Gene3D" id="1.20.58.80">
    <property type="entry name" value="Phosphotransferase system, lactose/cellobiose-type IIA subunit"/>
    <property type="match status" value="1"/>
</dbReference>
<dbReference type="Gene3D" id="1.10.510.10">
    <property type="entry name" value="Transferase(Phosphotransferase) domain 1"/>
    <property type="match status" value="1"/>
</dbReference>
<dbReference type="InterPro" id="IPR051866">
    <property type="entry name" value="Intracell_Sig-Traffick_Protein"/>
</dbReference>
<dbReference type="InterPro" id="IPR011009">
    <property type="entry name" value="Kinase-like_dom_sf"/>
</dbReference>
<dbReference type="InterPro" id="IPR007330">
    <property type="entry name" value="MIT_dom"/>
</dbReference>
<dbReference type="InterPro" id="IPR036181">
    <property type="entry name" value="MIT_dom_sf"/>
</dbReference>
<dbReference type="InterPro" id="IPR000719">
    <property type="entry name" value="Prot_kinase_dom"/>
</dbReference>
<dbReference type="InterPro" id="IPR035053">
    <property type="entry name" value="STK_RPK118-like"/>
</dbReference>
<dbReference type="PANTHER" id="PTHR15508">
    <property type="entry name" value="RIBOSOMAL PROTEIN S6 KINASE"/>
    <property type="match status" value="1"/>
</dbReference>
<dbReference type="PANTHER" id="PTHR15508:SF4">
    <property type="entry name" value="RIBOSOMAL PROTEIN S6 KINASE-LIKE 1"/>
    <property type="match status" value="1"/>
</dbReference>
<dbReference type="Pfam" id="PF04212">
    <property type="entry name" value="MIT"/>
    <property type="match status" value="1"/>
</dbReference>
<dbReference type="Pfam" id="PF00069">
    <property type="entry name" value="Pkinase"/>
    <property type="match status" value="1"/>
</dbReference>
<dbReference type="SMART" id="SM00745">
    <property type="entry name" value="MIT"/>
    <property type="match status" value="1"/>
</dbReference>
<dbReference type="SMART" id="SM00220">
    <property type="entry name" value="S_TKc"/>
    <property type="match status" value="1"/>
</dbReference>
<dbReference type="SUPFAM" id="SSF116846">
    <property type="entry name" value="MIT domain"/>
    <property type="match status" value="1"/>
</dbReference>
<dbReference type="SUPFAM" id="SSF56112">
    <property type="entry name" value="Protein kinase-like (PK-like)"/>
    <property type="match status" value="1"/>
</dbReference>
<dbReference type="PROSITE" id="PS50011">
    <property type="entry name" value="PROTEIN_KINASE_DOM"/>
    <property type="match status" value="1"/>
</dbReference>
<gene>
    <name type="primary">Rps6kl1</name>
</gene>
<reference key="1">
    <citation type="journal article" date="2005" name="Science">
        <title>The transcriptional landscape of the mammalian genome.</title>
        <authorList>
            <person name="Carninci P."/>
            <person name="Kasukawa T."/>
            <person name="Katayama S."/>
            <person name="Gough J."/>
            <person name="Frith M.C."/>
            <person name="Maeda N."/>
            <person name="Oyama R."/>
            <person name="Ravasi T."/>
            <person name="Lenhard B."/>
            <person name="Wells C."/>
            <person name="Kodzius R."/>
            <person name="Shimokawa K."/>
            <person name="Bajic V.B."/>
            <person name="Brenner S.E."/>
            <person name="Batalov S."/>
            <person name="Forrest A.R."/>
            <person name="Zavolan M."/>
            <person name="Davis M.J."/>
            <person name="Wilming L.G."/>
            <person name="Aidinis V."/>
            <person name="Allen J.E."/>
            <person name="Ambesi-Impiombato A."/>
            <person name="Apweiler R."/>
            <person name="Aturaliya R.N."/>
            <person name="Bailey T.L."/>
            <person name="Bansal M."/>
            <person name="Baxter L."/>
            <person name="Beisel K.W."/>
            <person name="Bersano T."/>
            <person name="Bono H."/>
            <person name="Chalk A.M."/>
            <person name="Chiu K.P."/>
            <person name="Choudhary V."/>
            <person name="Christoffels A."/>
            <person name="Clutterbuck D.R."/>
            <person name="Crowe M.L."/>
            <person name="Dalla E."/>
            <person name="Dalrymple B.P."/>
            <person name="de Bono B."/>
            <person name="Della Gatta G."/>
            <person name="di Bernardo D."/>
            <person name="Down T."/>
            <person name="Engstrom P."/>
            <person name="Fagiolini M."/>
            <person name="Faulkner G."/>
            <person name="Fletcher C.F."/>
            <person name="Fukushima T."/>
            <person name="Furuno M."/>
            <person name="Futaki S."/>
            <person name="Gariboldi M."/>
            <person name="Georgii-Hemming P."/>
            <person name="Gingeras T.R."/>
            <person name="Gojobori T."/>
            <person name="Green R.E."/>
            <person name="Gustincich S."/>
            <person name="Harbers M."/>
            <person name="Hayashi Y."/>
            <person name="Hensch T.K."/>
            <person name="Hirokawa N."/>
            <person name="Hill D."/>
            <person name="Huminiecki L."/>
            <person name="Iacono M."/>
            <person name="Ikeo K."/>
            <person name="Iwama A."/>
            <person name="Ishikawa T."/>
            <person name="Jakt M."/>
            <person name="Kanapin A."/>
            <person name="Katoh M."/>
            <person name="Kawasawa Y."/>
            <person name="Kelso J."/>
            <person name="Kitamura H."/>
            <person name="Kitano H."/>
            <person name="Kollias G."/>
            <person name="Krishnan S.P."/>
            <person name="Kruger A."/>
            <person name="Kummerfeld S.K."/>
            <person name="Kurochkin I.V."/>
            <person name="Lareau L.F."/>
            <person name="Lazarevic D."/>
            <person name="Lipovich L."/>
            <person name="Liu J."/>
            <person name="Liuni S."/>
            <person name="McWilliam S."/>
            <person name="Madan Babu M."/>
            <person name="Madera M."/>
            <person name="Marchionni L."/>
            <person name="Matsuda H."/>
            <person name="Matsuzawa S."/>
            <person name="Miki H."/>
            <person name="Mignone F."/>
            <person name="Miyake S."/>
            <person name="Morris K."/>
            <person name="Mottagui-Tabar S."/>
            <person name="Mulder N."/>
            <person name="Nakano N."/>
            <person name="Nakauchi H."/>
            <person name="Ng P."/>
            <person name="Nilsson R."/>
            <person name="Nishiguchi S."/>
            <person name="Nishikawa S."/>
            <person name="Nori F."/>
            <person name="Ohara O."/>
            <person name="Okazaki Y."/>
            <person name="Orlando V."/>
            <person name="Pang K.C."/>
            <person name="Pavan W.J."/>
            <person name="Pavesi G."/>
            <person name="Pesole G."/>
            <person name="Petrovsky N."/>
            <person name="Piazza S."/>
            <person name="Reed J."/>
            <person name="Reid J.F."/>
            <person name="Ring B.Z."/>
            <person name="Ringwald M."/>
            <person name="Rost B."/>
            <person name="Ruan Y."/>
            <person name="Salzberg S.L."/>
            <person name="Sandelin A."/>
            <person name="Schneider C."/>
            <person name="Schoenbach C."/>
            <person name="Sekiguchi K."/>
            <person name="Semple C.A."/>
            <person name="Seno S."/>
            <person name="Sessa L."/>
            <person name="Sheng Y."/>
            <person name="Shibata Y."/>
            <person name="Shimada H."/>
            <person name="Shimada K."/>
            <person name="Silva D."/>
            <person name="Sinclair B."/>
            <person name="Sperling S."/>
            <person name="Stupka E."/>
            <person name="Sugiura K."/>
            <person name="Sultana R."/>
            <person name="Takenaka Y."/>
            <person name="Taki K."/>
            <person name="Tammoja K."/>
            <person name="Tan S.L."/>
            <person name="Tang S."/>
            <person name="Taylor M.S."/>
            <person name="Tegner J."/>
            <person name="Teichmann S.A."/>
            <person name="Ueda H.R."/>
            <person name="van Nimwegen E."/>
            <person name="Verardo R."/>
            <person name="Wei C.L."/>
            <person name="Yagi K."/>
            <person name="Yamanishi H."/>
            <person name="Zabarovsky E."/>
            <person name="Zhu S."/>
            <person name="Zimmer A."/>
            <person name="Hide W."/>
            <person name="Bult C."/>
            <person name="Grimmond S.M."/>
            <person name="Teasdale R.D."/>
            <person name="Liu E.T."/>
            <person name="Brusic V."/>
            <person name="Quackenbush J."/>
            <person name="Wahlestedt C."/>
            <person name="Mattick J.S."/>
            <person name="Hume D.A."/>
            <person name="Kai C."/>
            <person name="Sasaki D."/>
            <person name="Tomaru Y."/>
            <person name="Fukuda S."/>
            <person name="Kanamori-Katayama M."/>
            <person name="Suzuki M."/>
            <person name="Aoki J."/>
            <person name="Arakawa T."/>
            <person name="Iida J."/>
            <person name="Imamura K."/>
            <person name="Itoh M."/>
            <person name="Kato T."/>
            <person name="Kawaji H."/>
            <person name="Kawagashira N."/>
            <person name="Kawashima T."/>
            <person name="Kojima M."/>
            <person name="Kondo S."/>
            <person name="Konno H."/>
            <person name="Nakano K."/>
            <person name="Ninomiya N."/>
            <person name="Nishio T."/>
            <person name="Okada M."/>
            <person name="Plessy C."/>
            <person name="Shibata K."/>
            <person name="Shiraki T."/>
            <person name="Suzuki S."/>
            <person name="Tagami M."/>
            <person name="Waki K."/>
            <person name="Watahiki A."/>
            <person name="Okamura-Oho Y."/>
            <person name="Suzuki H."/>
            <person name="Kawai J."/>
            <person name="Hayashizaki Y."/>
        </authorList>
    </citation>
    <scope>NUCLEOTIDE SEQUENCE [LARGE SCALE MRNA] (ISOFORM 1)</scope>
    <source>
        <strain>C57BL/6J</strain>
        <tissue>Brain cortex</tissue>
    </source>
</reference>
<reference key="2">
    <citation type="journal article" date="2004" name="Genome Res.">
        <title>The status, quality, and expansion of the NIH full-length cDNA project: the Mammalian Gene Collection (MGC).</title>
        <authorList>
            <consortium name="The MGC Project Team"/>
        </authorList>
    </citation>
    <scope>NUCLEOTIDE SEQUENCE [LARGE SCALE MRNA] (ISOFORMS 1 AND 2)</scope>
    <source>
        <strain>FVB/N</strain>
        <tissue>Eye</tissue>
        <tissue>Mammary tumor</tissue>
    </source>
</reference>
<reference key="3">
    <citation type="submission" date="2009-01" db="UniProtKB">
        <authorList>
            <person name="Lubec G."/>
            <person name="Sunyer B."/>
            <person name="Chen W.-Q."/>
        </authorList>
    </citation>
    <scope>PROTEIN SEQUENCE OF 361-374</scope>
    <scope>IDENTIFICATION BY MASS SPECTROMETRY</scope>
    <source>
        <strain>OF1</strain>
        <tissue>Hippocampus</tissue>
    </source>
</reference>
<sequence length="544" mass="60193">MSLVACECPPGPGLEPEPCSRARSQACMYLEQIRNRVATGTADVTKRDYLVDAATQIHLALERDVSEDYEAAFNHYQNGVDVLLRGVHVDPNKERREAVKLKITKYLRRAEEIFNCHLQRTLGSGASPNTGFSSLRLRPIRTLSSALEQLKGCRVVGIIKKVQVVQDPATGGTFIVKSLPRCHMVSRERLTIIPHGVPYMTKLLRYFVSEDSIFLHLEHVQGGTLWSHLLSQDHFQYSGLNSGSVQEKSQAQLSTRLSLMTPAELTPGHTLRQNRIPMEPPRTSQSLPPALQLQKEADAEPSSRPSAVFSSDPTEAPCGHSHSQVRRAGQSSNPAPTQRLHWVREGADRVLGAYGRGRGRNPPSANRASLGSGRAAWSLREGQVKQWAAEMLLALEALHQQGVLCRDLNPQNLLLDQAGHIQLTYFGQWSEVEPRCSQEAVDCLYSAPEVGGISELTEACDWWSYGSLLYELLTGMALSQSHPSGFQAHTQLQLPEWLSHPAASLLTELLQFEPQRRLGAGGGGTSRLKSHPFFSTIQWSRLMG</sequence>